<gene>
    <name evidence="1" type="primary">lspA</name>
    <name type="ordered locus">SF0023</name>
    <name type="ordered locus">S0026</name>
</gene>
<accession>Q83MH1</accession>
<accession>Q7C3C3</accession>
<dbReference type="EC" id="3.4.23.36" evidence="1"/>
<dbReference type="EMBL" id="AE005674">
    <property type="protein sequence ID" value="AAN41689.1"/>
    <property type="molecule type" value="Genomic_DNA"/>
</dbReference>
<dbReference type="EMBL" id="AE014073">
    <property type="protein sequence ID" value="AAP15571.1"/>
    <property type="molecule type" value="Genomic_DNA"/>
</dbReference>
<dbReference type="RefSeq" id="NP_705982.1">
    <property type="nucleotide sequence ID" value="NC_004337.2"/>
</dbReference>
<dbReference type="RefSeq" id="WP_000083382.1">
    <property type="nucleotide sequence ID" value="NZ_WPGW01000005.1"/>
</dbReference>
<dbReference type="SMR" id="Q83MH1"/>
<dbReference type="STRING" id="198214.SF0023"/>
<dbReference type="MEROPS" id="A08.001"/>
<dbReference type="PaxDb" id="198214-SF0023"/>
<dbReference type="GeneID" id="1024585"/>
<dbReference type="KEGG" id="sfl:SF0023"/>
<dbReference type="KEGG" id="sfx:S0026"/>
<dbReference type="PATRIC" id="fig|198214.7.peg.26"/>
<dbReference type="HOGENOM" id="CLU_083252_4_0_6"/>
<dbReference type="UniPathway" id="UPA00665"/>
<dbReference type="Proteomes" id="UP000001006">
    <property type="component" value="Chromosome"/>
</dbReference>
<dbReference type="Proteomes" id="UP000002673">
    <property type="component" value="Chromosome"/>
</dbReference>
<dbReference type="GO" id="GO:0005886">
    <property type="term" value="C:plasma membrane"/>
    <property type="evidence" value="ECO:0007669"/>
    <property type="project" value="UniProtKB-SubCell"/>
</dbReference>
<dbReference type="GO" id="GO:0004190">
    <property type="term" value="F:aspartic-type endopeptidase activity"/>
    <property type="evidence" value="ECO:0007669"/>
    <property type="project" value="UniProtKB-UniRule"/>
</dbReference>
<dbReference type="GO" id="GO:0006508">
    <property type="term" value="P:proteolysis"/>
    <property type="evidence" value="ECO:0007669"/>
    <property type="project" value="UniProtKB-KW"/>
</dbReference>
<dbReference type="HAMAP" id="MF_00161">
    <property type="entry name" value="LspA"/>
    <property type="match status" value="1"/>
</dbReference>
<dbReference type="InterPro" id="IPR001872">
    <property type="entry name" value="Peptidase_A8"/>
</dbReference>
<dbReference type="NCBIfam" id="TIGR00077">
    <property type="entry name" value="lspA"/>
    <property type="match status" value="1"/>
</dbReference>
<dbReference type="PANTHER" id="PTHR33695">
    <property type="entry name" value="LIPOPROTEIN SIGNAL PEPTIDASE"/>
    <property type="match status" value="1"/>
</dbReference>
<dbReference type="PANTHER" id="PTHR33695:SF1">
    <property type="entry name" value="LIPOPROTEIN SIGNAL PEPTIDASE"/>
    <property type="match status" value="1"/>
</dbReference>
<dbReference type="Pfam" id="PF01252">
    <property type="entry name" value="Peptidase_A8"/>
    <property type="match status" value="1"/>
</dbReference>
<dbReference type="PRINTS" id="PR00781">
    <property type="entry name" value="LIPOSIGPTASE"/>
</dbReference>
<dbReference type="PROSITE" id="PS00855">
    <property type="entry name" value="SPASE_II"/>
    <property type="match status" value="1"/>
</dbReference>
<proteinExistence type="inferred from homology"/>
<keyword id="KW-0064">Aspartyl protease</keyword>
<keyword id="KW-0997">Cell inner membrane</keyword>
<keyword id="KW-1003">Cell membrane</keyword>
<keyword id="KW-0378">Hydrolase</keyword>
<keyword id="KW-0472">Membrane</keyword>
<keyword id="KW-0645">Protease</keyword>
<keyword id="KW-1185">Reference proteome</keyword>
<keyword id="KW-0812">Transmembrane</keyword>
<keyword id="KW-1133">Transmembrane helix</keyword>
<protein>
    <recommendedName>
        <fullName evidence="1">Lipoprotein signal peptidase</fullName>
        <ecNumber evidence="1">3.4.23.36</ecNumber>
    </recommendedName>
    <alternativeName>
        <fullName evidence="1">Prolipoprotein signal peptidase</fullName>
    </alternativeName>
    <alternativeName>
        <fullName evidence="1">Signal peptidase II</fullName>
        <shortName evidence="1">SPase II</shortName>
    </alternativeName>
</protein>
<feature type="chain" id="PRO_0000289425" description="Lipoprotein signal peptidase">
    <location>
        <begin position="1"/>
        <end position="164"/>
    </location>
</feature>
<feature type="transmembrane region" description="Helical" evidence="1">
    <location>
        <begin position="12"/>
        <end position="32"/>
    </location>
</feature>
<feature type="transmembrane region" description="Helical" evidence="1">
    <location>
        <begin position="70"/>
        <end position="90"/>
    </location>
</feature>
<feature type="transmembrane region" description="Helical" evidence="1">
    <location>
        <begin position="102"/>
        <end position="122"/>
    </location>
</feature>
<feature type="transmembrane region" description="Helical" evidence="1">
    <location>
        <begin position="137"/>
        <end position="157"/>
    </location>
</feature>
<feature type="active site" evidence="1">
    <location>
        <position position="123"/>
    </location>
</feature>
<feature type="active site" evidence="1">
    <location>
        <position position="141"/>
    </location>
</feature>
<organism>
    <name type="scientific">Shigella flexneri</name>
    <dbReference type="NCBI Taxonomy" id="623"/>
    <lineage>
        <taxon>Bacteria</taxon>
        <taxon>Pseudomonadati</taxon>
        <taxon>Pseudomonadota</taxon>
        <taxon>Gammaproteobacteria</taxon>
        <taxon>Enterobacterales</taxon>
        <taxon>Enterobacteriaceae</taxon>
        <taxon>Shigella</taxon>
    </lineage>
</organism>
<evidence type="ECO:0000255" key="1">
    <source>
        <dbReference type="HAMAP-Rule" id="MF_00161"/>
    </source>
</evidence>
<name>LSPA_SHIFL</name>
<reference key="1">
    <citation type="journal article" date="2002" name="Nucleic Acids Res.">
        <title>Genome sequence of Shigella flexneri 2a: insights into pathogenicity through comparison with genomes of Escherichia coli K12 and O157.</title>
        <authorList>
            <person name="Jin Q."/>
            <person name="Yuan Z."/>
            <person name="Xu J."/>
            <person name="Wang Y."/>
            <person name="Shen Y."/>
            <person name="Lu W."/>
            <person name="Wang J."/>
            <person name="Liu H."/>
            <person name="Yang J."/>
            <person name="Yang F."/>
            <person name="Zhang X."/>
            <person name="Zhang J."/>
            <person name="Yang G."/>
            <person name="Wu H."/>
            <person name="Qu D."/>
            <person name="Dong J."/>
            <person name="Sun L."/>
            <person name="Xue Y."/>
            <person name="Zhao A."/>
            <person name="Gao Y."/>
            <person name="Zhu J."/>
            <person name="Kan B."/>
            <person name="Ding K."/>
            <person name="Chen S."/>
            <person name="Cheng H."/>
            <person name="Yao Z."/>
            <person name="He B."/>
            <person name="Chen R."/>
            <person name="Ma D."/>
            <person name="Qiang B."/>
            <person name="Wen Y."/>
            <person name="Hou Y."/>
            <person name="Yu J."/>
        </authorList>
    </citation>
    <scope>NUCLEOTIDE SEQUENCE [LARGE SCALE GENOMIC DNA]</scope>
    <source>
        <strain>301 / Serotype 2a</strain>
    </source>
</reference>
<reference key="2">
    <citation type="journal article" date="2003" name="Infect. Immun.">
        <title>Complete genome sequence and comparative genomics of Shigella flexneri serotype 2a strain 2457T.</title>
        <authorList>
            <person name="Wei J."/>
            <person name="Goldberg M.B."/>
            <person name="Burland V."/>
            <person name="Venkatesan M.M."/>
            <person name="Deng W."/>
            <person name="Fournier G."/>
            <person name="Mayhew G.F."/>
            <person name="Plunkett G. III"/>
            <person name="Rose D.J."/>
            <person name="Darling A."/>
            <person name="Mau B."/>
            <person name="Perna N.T."/>
            <person name="Payne S.M."/>
            <person name="Runyen-Janecky L.J."/>
            <person name="Zhou S."/>
            <person name="Schwartz D.C."/>
            <person name="Blattner F.R."/>
        </authorList>
    </citation>
    <scope>NUCLEOTIDE SEQUENCE [LARGE SCALE GENOMIC DNA]</scope>
    <source>
        <strain>ATCC 700930 / 2457T / Serotype 2a</strain>
    </source>
</reference>
<comment type="function">
    <text evidence="1">This protein specifically catalyzes the removal of signal peptides from prolipoproteins.</text>
</comment>
<comment type="catalytic activity">
    <reaction evidence="1">
        <text>Release of signal peptides from bacterial membrane prolipoproteins. Hydrolyzes -Xaa-Yaa-Zaa-|-(S,diacylglyceryl)Cys-, in which Xaa is hydrophobic (preferably Leu), and Yaa (Ala or Ser) and Zaa (Gly or Ala) have small, neutral side chains.</text>
        <dbReference type="EC" id="3.4.23.36"/>
    </reaction>
</comment>
<comment type="pathway">
    <text evidence="1">Protein modification; lipoprotein biosynthesis (signal peptide cleavage).</text>
</comment>
<comment type="subcellular location">
    <subcellularLocation>
        <location evidence="1">Cell inner membrane</location>
        <topology evidence="1">Multi-pass membrane protein</topology>
    </subcellularLocation>
</comment>
<comment type="similarity">
    <text evidence="1">Belongs to the peptidase A8 family.</text>
</comment>
<sequence length="164" mass="18128">MSQSICSTGLRWLWLVVVVLIIDLGSKYLILQNFALGDTVPLFPSLNLHYARNYGAAFSFLADSGGWQRWFFAGIAIGISVLLAVMMYRSKATQKLNNIAYALIIGGALGNLFDRLWHGFVVDMIDFYVGDWHFATFNLADTAICVGAALIVLEGFLPSKAKKQ</sequence>